<keyword id="KW-0028">Amino-acid biosynthesis</keyword>
<keyword id="KW-0963">Cytoplasm</keyword>
<keyword id="KW-0238">DNA-binding</keyword>
<keyword id="KW-0486">Methionine biosynthesis</keyword>
<keyword id="KW-0678">Repressor</keyword>
<keyword id="KW-0804">Transcription</keyword>
<keyword id="KW-0805">Transcription regulation</keyword>
<name>METJ_HAMD5</name>
<evidence type="ECO:0000255" key="1">
    <source>
        <dbReference type="HAMAP-Rule" id="MF_00744"/>
    </source>
</evidence>
<sequence length="105" mass="12210">MAKWNGQYISPYAEQGKKSEQVKKITVCIPTKVLKILTDERTRRQINNLRHATNSELLCEAFLHAFTGQPLPNDDDLRKERNDEIPQAARILMRDLGINPDTWEY</sequence>
<feature type="chain" id="PRO_1000212835" description="Met repressor">
    <location>
        <begin position="1"/>
        <end position="105"/>
    </location>
</feature>
<accession>C4K6P9</accession>
<proteinExistence type="inferred from homology"/>
<reference key="1">
    <citation type="journal article" date="2009" name="Proc. Natl. Acad. Sci. U.S.A.">
        <title>Hamiltonella defensa, genome evolution of protective bacterial endosymbiont from pathogenic ancestors.</title>
        <authorList>
            <person name="Degnan P.H."/>
            <person name="Yu Y."/>
            <person name="Sisneros N."/>
            <person name="Wing R.A."/>
            <person name="Moran N.A."/>
        </authorList>
    </citation>
    <scope>NUCLEOTIDE SEQUENCE [LARGE SCALE GENOMIC DNA]</scope>
    <source>
        <strain>5AT</strain>
    </source>
</reference>
<dbReference type="EMBL" id="CP001277">
    <property type="protein sequence ID" value="ACQ68242.1"/>
    <property type="molecule type" value="Genomic_DNA"/>
</dbReference>
<dbReference type="RefSeq" id="WP_015874009.1">
    <property type="nucleotide sequence ID" value="NC_012751.1"/>
</dbReference>
<dbReference type="SMR" id="C4K6P9"/>
<dbReference type="STRING" id="572265.HDEF_1630"/>
<dbReference type="GeneID" id="66261238"/>
<dbReference type="KEGG" id="hde:HDEF_1630"/>
<dbReference type="eggNOG" id="COG3060">
    <property type="taxonomic scope" value="Bacteria"/>
</dbReference>
<dbReference type="HOGENOM" id="CLU_142318_0_0_6"/>
<dbReference type="Proteomes" id="UP000002334">
    <property type="component" value="Chromosome"/>
</dbReference>
<dbReference type="GO" id="GO:0005737">
    <property type="term" value="C:cytoplasm"/>
    <property type="evidence" value="ECO:0007669"/>
    <property type="project" value="UniProtKB-SubCell"/>
</dbReference>
<dbReference type="GO" id="GO:0003677">
    <property type="term" value="F:DNA binding"/>
    <property type="evidence" value="ECO:0007669"/>
    <property type="project" value="UniProtKB-KW"/>
</dbReference>
<dbReference type="GO" id="GO:0003700">
    <property type="term" value="F:DNA-binding transcription factor activity"/>
    <property type="evidence" value="ECO:0007669"/>
    <property type="project" value="InterPro"/>
</dbReference>
<dbReference type="GO" id="GO:0009086">
    <property type="term" value="P:methionine biosynthetic process"/>
    <property type="evidence" value="ECO:0007669"/>
    <property type="project" value="UniProtKB-UniRule"/>
</dbReference>
<dbReference type="GO" id="GO:0045892">
    <property type="term" value="P:negative regulation of DNA-templated transcription"/>
    <property type="evidence" value="ECO:0007669"/>
    <property type="project" value="UniProtKB-UniRule"/>
</dbReference>
<dbReference type="FunFam" id="1.10.140.10:FF:000001">
    <property type="entry name" value="Met repressor"/>
    <property type="match status" value="1"/>
</dbReference>
<dbReference type="Gene3D" id="1.10.140.10">
    <property type="entry name" value="MET Apo-Repressor, subunit A"/>
    <property type="match status" value="1"/>
</dbReference>
<dbReference type="HAMAP" id="MF_00744">
    <property type="entry name" value="MetJ"/>
    <property type="match status" value="1"/>
</dbReference>
<dbReference type="InterPro" id="IPR002084">
    <property type="entry name" value="Met_repressor_MetJ"/>
</dbReference>
<dbReference type="InterPro" id="IPR023453">
    <property type="entry name" value="Met_repressor_MetJ_dom_sf"/>
</dbReference>
<dbReference type="InterPro" id="IPR010985">
    <property type="entry name" value="Ribbon_hlx_hlx"/>
</dbReference>
<dbReference type="NCBIfam" id="NF003622">
    <property type="entry name" value="PRK05264.1"/>
    <property type="match status" value="1"/>
</dbReference>
<dbReference type="Pfam" id="PF01340">
    <property type="entry name" value="MetJ"/>
    <property type="match status" value="1"/>
</dbReference>
<dbReference type="SUPFAM" id="SSF47598">
    <property type="entry name" value="Ribbon-helix-helix"/>
    <property type="match status" value="1"/>
</dbReference>
<organism>
    <name type="scientific">Hamiltonella defensa subsp. Acyrthosiphon pisum (strain 5AT)</name>
    <dbReference type="NCBI Taxonomy" id="572265"/>
    <lineage>
        <taxon>Bacteria</taxon>
        <taxon>Pseudomonadati</taxon>
        <taxon>Pseudomonadota</taxon>
        <taxon>Gammaproteobacteria</taxon>
        <taxon>Enterobacterales</taxon>
        <taxon>Enterobacteriaceae</taxon>
        <taxon>aphid secondary symbionts</taxon>
        <taxon>Candidatus Hamiltonella</taxon>
    </lineage>
</organism>
<gene>
    <name evidence="1" type="primary">metJ</name>
    <name type="ordered locus">HDEF_1630</name>
</gene>
<comment type="function">
    <text evidence="1">This regulatory protein, when combined with SAM (S-adenosylmethionine) represses the expression of the methionine regulon and of enzymes involved in SAM synthesis.</text>
</comment>
<comment type="subunit">
    <text evidence="1">Homodimer.</text>
</comment>
<comment type="subcellular location">
    <subcellularLocation>
        <location evidence="1">Cytoplasm</location>
    </subcellularLocation>
</comment>
<comment type="domain">
    <text>Does not bind DNA by a helix-turn-helix motif.</text>
</comment>
<comment type="similarity">
    <text evidence="1">Belongs to the MetJ family.</text>
</comment>
<protein>
    <recommendedName>
        <fullName evidence="1">Met repressor</fullName>
    </recommendedName>
    <alternativeName>
        <fullName evidence="1">Met regulon regulatory protein MetJ</fullName>
    </alternativeName>
</protein>